<dbReference type="EMBL" id="AF105369">
    <property type="protein sequence ID" value="AAD39358.1"/>
    <property type="status" value="ALT_FRAME"/>
    <property type="molecule type" value="mRNA"/>
</dbReference>
<dbReference type="EMBL" id="AF243529">
    <property type="protein sequence ID" value="AAF98790.1"/>
    <property type="status" value="ALT_FRAME"/>
    <property type="molecule type" value="Genomic_DNA"/>
</dbReference>
<dbReference type="EMBL" id="AK023996">
    <property type="protein sequence ID" value="BAG51248.1"/>
    <property type="molecule type" value="mRNA"/>
</dbReference>
<dbReference type="EMBL" id="AK298672">
    <property type="protein sequence ID" value="BAG60838.1"/>
    <property type="molecule type" value="mRNA"/>
</dbReference>
<dbReference type="EMBL" id="AC073548">
    <property type="status" value="NOT_ANNOTATED_CDS"/>
    <property type="molecule type" value="Genomic_DNA"/>
</dbReference>
<dbReference type="EMBL" id="CH471126">
    <property type="protein sequence ID" value="EAW57487.1"/>
    <property type="molecule type" value="Genomic_DNA"/>
</dbReference>
<dbReference type="EMBL" id="BC009249">
    <property type="protein sequence ID" value="AAH09249.1"/>
    <property type="molecule type" value="mRNA"/>
</dbReference>
<dbReference type="CCDS" id="CCDS42583.1">
    <molecule id="Q9Y664-1"/>
</dbReference>
<dbReference type="RefSeq" id="NP_001278225.1">
    <property type="nucleotide sequence ID" value="NM_001291296.1"/>
</dbReference>
<dbReference type="RefSeq" id="NP_008990.2">
    <molecule id="Q9Y664-1"/>
    <property type="nucleotide sequence ID" value="NM_007059.4"/>
</dbReference>
<dbReference type="BioGRID" id="116306">
    <property type="interactions" value="58"/>
</dbReference>
<dbReference type="ComplexPortal" id="CPX-6229">
    <property type="entry name" value="KICSTOR complex"/>
</dbReference>
<dbReference type="CORUM" id="Q9Y664"/>
<dbReference type="FunCoup" id="Q9Y664">
    <property type="interactions" value="9"/>
</dbReference>
<dbReference type="IntAct" id="Q9Y664">
    <property type="interactions" value="38"/>
</dbReference>
<dbReference type="MINT" id="Q9Y664"/>
<dbReference type="STRING" id="9606.ENSP00000337850"/>
<dbReference type="iPTMnet" id="Q9Y664"/>
<dbReference type="PhosphoSitePlus" id="Q9Y664"/>
<dbReference type="BioMuta" id="KPTN"/>
<dbReference type="DMDM" id="108936022"/>
<dbReference type="jPOST" id="Q9Y664"/>
<dbReference type="MassIVE" id="Q9Y664"/>
<dbReference type="PaxDb" id="9606-ENSP00000337850"/>
<dbReference type="PeptideAtlas" id="Q9Y664"/>
<dbReference type="ProteomicsDB" id="4853"/>
<dbReference type="ProteomicsDB" id="86607">
    <molecule id="Q9Y664-1"/>
</dbReference>
<dbReference type="Pumba" id="Q9Y664"/>
<dbReference type="Antibodypedia" id="31573">
    <property type="antibodies" value="185 antibodies from 23 providers"/>
</dbReference>
<dbReference type="DNASU" id="11133"/>
<dbReference type="Ensembl" id="ENST00000338134.8">
    <molecule id="Q9Y664-1"/>
    <property type="protein sequence ID" value="ENSP00000337850.2"/>
    <property type="gene ID" value="ENSG00000118162.14"/>
</dbReference>
<dbReference type="GeneID" id="11133"/>
<dbReference type="KEGG" id="hsa:11133"/>
<dbReference type="MANE-Select" id="ENST00000338134.8">
    <property type="protein sequence ID" value="ENSP00000337850.2"/>
    <property type="RefSeq nucleotide sequence ID" value="NM_007059.4"/>
    <property type="RefSeq protein sequence ID" value="NP_008990.2"/>
</dbReference>
<dbReference type="UCSC" id="uc002pgy.4">
    <molecule id="Q9Y664-1"/>
    <property type="organism name" value="human"/>
</dbReference>
<dbReference type="AGR" id="HGNC:6404"/>
<dbReference type="CTD" id="11133"/>
<dbReference type="DisGeNET" id="11133"/>
<dbReference type="GeneCards" id="KPTN"/>
<dbReference type="GeneReviews" id="KPTN"/>
<dbReference type="HGNC" id="HGNC:6404">
    <property type="gene designation" value="KPTN"/>
</dbReference>
<dbReference type="HPA" id="ENSG00000118162">
    <property type="expression patterns" value="Low tissue specificity"/>
</dbReference>
<dbReference type="MalaCards" id="KPTN"/>
<dbReference type="MIM" id="615620">
    <property type="type" value="gene"/>
</dbReference>
<dbReference type="MIM" id="615637">
    <property type="type" value="phenotype"/>
</dbReference>
<dbReference type="neXtProt" id="NX_Q9Y664"/>
<dbReference type="OpenTargets" id="ENSG00000118162"/>
<dbReference type="Orphanet" id="397612">
    <property type="disease" value="Macrocephaly-developmental delay syndrome"/>
</dbReference>
<dbReference type="PharmGKB" id="PA30194"/>
<dbReference type="VEuPathDB" id="HostDB:ENSG00000118162"/>
<dbReference type="eggNOG" id="ENOG502QTF2">
    <property type="taxonomic scope" value="Eukaryota"/>
</dbReference>
<dbReference type="GeneTree" id="ENSGT00390000002548"/>
<dbReference type="HOGENOM" id="CLU_037754_0_0_1"/>
<dbReference type="InParanoid" id="Q9Y664"/>
<dbReference type="OMA" id="REDIHQT"/>
<dbReference type="OrthoDB" id="10267127at2759"/>
<dbReference type="PAN-GO" id="Q9Y664">
    <property type="GO annotations" value="5 GO annotations based on evolutionary models"/>
</dbReference>
<dbReference type="PhylomeDB" id="Q9Y664"/>
<dbReference type="TreeFam" id="TF328973"/>
<dbReference type="PathwayCommons" id="Q9Y664"/>
<dbReference type="Reactome" id="R-HSA-9639288">
    <property type="pathway name" value="Amino acids regulate mTORC1"/>
</dbReference>
<dbReference type="SignaLink" id="Q9Y664"/>
<dbReference type="BioGRID-ORCS" id="11133">
    <property type="hits" value="20 hits in 1154 CRISPR screens"/>
</dbReference>
<dbReference type="ChiTaRS" id="KPTN">
    <property type="organism name" value="human"/>
</dbReference>
<dbReference type="GeneWiki" id="Kaptin_(actin_binding_protein)"/>
<dbReference type="GenomeRNAi" id="11133"/>
<dbReference type="Pharos" id="Q9Y664">
    <property type="development level" value="Tbio"/>
</dbReference>
<dbReference type="PRO" id="PR:Q9Y664"/>
<dbReference type="Proteomes" id="UP000005640">
    <property type="component" value="Chromosome 19"/>
</dbReference>
<dbReference type="RNAct" id="Q9Y664">
    <property type="molecule type" value="protein"/>
</dbReference>
<dbReference type="Bgee" id="ENSG00000118162">
    <property type="expression patterns" value="Expressed in right hemisphere of cerebellum and 147 other cell types or tissues"/>
</dbReference>
<dbReference type="ExpressionAtlas" id="Q9Y664">
    <property type="expression patterns" value="baseline and differential"/>
</dbReference>
<dbReference type="GO" id="GO:0098978">
    <property type="term" value="C:glutamatergic synapse"/>
    <property type="evidence" value="ECO:0007669"/>
    <property type="project" value="Ensembl"/>
</dbReference>
<dbReference type="GO" id="GO:0140007">
    <property type="term" value="C:KICSTOR complex"/>
    <property type="evidence" value="ECO:0000314"/>
    <property type="project" value="UniProtKB"/>
</dbReference>
<dbReference type="GO" id="GO:0030027">
    <property type="term" value="C:lamellipodium"/>
    <property type="evidence" value="ECO:0000314"/>
    <property type="project" value="UniProtKB"/>
</dbReference>
<dbReference type="GO" id="GO:0005765">
    <property type="term" value="C:lysosomal membrane"/>
    <property type="evidence" value="ECO:0000304"/>
    <property type="project" value="Reactome"/>
</dbReference>
<dbReference type="GO" id="GO:0098871">
    <property type="term" value="C:postsynaptic actin cytoskeleton"/>
    <property type="evidence" value="ECO:0000314"/>
    <property type="project" value="UniProtKB"/>
</dbReference>
<dbReference type="GO" id="GO:0032420">
    <property type="term" value="C:stereocilium"/>
    <property type="evidence" value="ECO:0000250"/>
    <property type="project" value="UniProtKB"/>
</dbReference>
<dbReference type="GO" id="GO:0051015">
    <property type="term" value="F:actin filament binding"/>
    <property type="evidence" value="ECO:0000314"/>
    <property type="project" value="UniProtKB"/>
</dbReference>
<dbReference type="GO" id="GO:0007015">
    <property type="term" value="P:actin filament organization"/>
    <property type="evidence" value="ECO:0007669"/>
    <property type="project" value="InterPro"/>
</dbReference>
<dbReference type="GO" id="GO:0034198">
    <property type="term" value="P:cellular response to amino acid starvation"/>
    <property type="evidence" value="ECO:0000315"/>
    <property type="project" value="UniProtKB"/>
</dbReference>
<dbReference type="GO" id="GO:0042149">
    <property type="term" value="P:cellular response to glucose starvation"/>
    <property type="evidence" value="ECO:0000315"/>
    <property type="project" value="UniProtKB"/>
</dbReference>
<dbReference type="GO" id="GO:1904262">
    <property type="term" value="P:negative regulation of TORC1 signaling"/>
    <property type="evidence" value="ECO:0000315"/>
    <property type="project" value="UniProtKB"/>
</dbReference>
<dbReference type="GO" id="GO:0061462">
    <property type="term" value="P:protein localization to lysosome"/>
    <property type="evidence" value="ECO:0000315"/>
    <property type="project" value="UniProtKB"/>
</dbReference>
<dbReference type="InterPro" id="IPR028994">
    <property type="entry name" value="Integrin_alpha_N"/>
</dbReference>
<dbReference type="InterPro" id="IPR029982">
    <property type="entry name" value="Kptn"/>
</dbReference>
<dbReference type="PANTHER" id="PTHR15435">
    <property type="entry name" value="KICSTOR COMPLEX PROTEIN KAPTIN"/>
    <property type="match status" value="1"/>
</dbReference>
<dbReference type="PANTHER" id="PTHR15435:SF2">
    <property type="entry name" value="KICSTOR COMPLEX PROTEIN KAPTIN"/>
    <property type="match status" value="1"/>
</dbReference>
<dbReference type="SUPFAM" id="SSF69318">
    <property type="entry name" value="Integrin alpha N-terminal domain"/>
    <property type="match status" value="1"/>
</dbReference>
<organism>
    <name type="scientific">Homo sapiens</name>
    <name type="common">Human</name>
    <dbReference type="NCBI Taxonomy" id="9606"/>
    <lineage>
        <taxon>Eukaryota</taxon>
        <taxon>Metazoa</taxon>
        <taxon>Chordata</taxon>
        <taxon>Craniata</taxon>
        <taxon>Vertebrata</taxon>
        <taxon>Euteleostomi</taxon>
        <taxon>Mammalia</taxon>
        <taxon>Eutheria</taxon>
        <taxon>Euarchontoglires</taxon>
        <taxon>Primates</taxon>
        <taxon>Haplorrhini</taxon>
        <taxon>Catarrhini</taxon>
        <taxon>Hominidae</taxon>
        <taxon>Homo</taxon>
    </lineage>
</organism>
<reference key="1">
    <citation type="journal article" date="1992" name="J. Neurosci.">
        <title>An actin-associated protein present in the microtubule organizing center and the growth cones of PC-12 cells.</title>
        <authorList>
            <person name="Bearer E.L."/>
        </authorList>
    </citation>
    <scope>NUCLEOTIDE SEQUENCE [MRNA] (ISOFORM 1)</scope>
</reference>
<reference key="2">
    <citation type="journal article" date="1999" name="Eur. J. Cell Biol.">
        <title>2E4 (kaptin): a novel actin-associated protein from human blood platelets found in lamellipodia and the tips of the stereocilia of the inner ear.</title>
        <authorList>
            <person name="Bearer E.L."/>
            <person name="Abraham M.T."/>
        </authorList>
    </citation>
    <scope>NUCLEOTIDE SEQUENCE [GENOMIC DNA]</scope>
    <scope>SUBUNIT</scope>
    <scope>SUBCELLULAR LOCATION</scope>
</reference>
<reference key="3">
    <citation type="journal article" date="2004" name="Nat. Genet.">
        <title>Complete sequencing and characterization of 21,243 full-length human cDNAs.</title>
        <authorList>
            <person name="Ota T."/>
            <person name="Suzuki Y."/>
            <person name="Nishikawa T."/>
            <person name="Otsuki T."/>
            <person name="Sugiyama T."/>
            <person name="Irie R."/>
            <person name="Wakamatsu A."/>
            <person name="Hayashi K."/>
            <person name="Sato H."/>
            <person name="Nagai K."/>
            <person name="Kimura K."/>
            <person name="Makita H."/>
            <person name="Sekine M."/>
            <person name="Obayashi M."/>
            <person name="Nishi T."/>
            <person name="Shibahara T."/>
            <person name="Tanaka T."/>
            <person name="Ishii S."/>
            <person name="Yamamoto J."/>
            <person name="Saito K."/>
            <person name="Kawai Y."/>
            <person name="Isono Y."/>
            <person name="Nakamura Y."/>
            <person name="Nagahari K."/>
            <person name="Murakami K."/>
            <person name="Yasuda T."/>
            <person name="Iwayanagi T."/>
            <person name="Wagatsuma M."/>
            <person name="Shiratori A."/>
            <person name="Sudo H."/>
            <person name="Hosoiri T."/>
            <person name="Kaku Y."/>
            <person name="Kodaira H."/>
            <person name="Kondo H."/>
            <person name="Sugawara M."/>
            <person name="Takahashi M."/>
            <person name="Kanda K."/>
            <person name="Yokoi T."/>
            <person name="Furuya T."/>
            <person name="Kikkawa E."/>
            <person name="Omura Y."/>
            <person name="Abe K."/>
            <person name="Kamihara K."/>
            <person name="Katsuta N."/>
            <person name="Sato K."/>
            <person name="Tanikawa M."/>
            <person name="Yamazaki M."/>
            <person name="Ninomiya K."/>
            <person name="Ishibashi T."/>
            <person name="Yamashita H."/>
            <person name="Murakawa K."/>
            <person name="Fujimori K."/>
            <person name="Tanai H."/>
            <person name="Kimata M."/>
            <person name="Watanabe M."/>
            <person name="Hiraoka S."/>
            <person name="Chiba Y."/>
            <person name="Ishida S."/>
            <person name="Ono Y."/>
            <person name="Takiguchi S."/>
            <person name="Watanabe S."/>
            <person name="Yosida M."/>
            <person name="Hotuta T."/>
            <person name="Kusano J."/>
            <person name="Kanehori K."/>
            <person name="Takahashi-Fujii A."/>
            <person name="Hara H."/>
            <person name="Tanase T.-O."/>
            <person name="Nomura Y."/>
            <person name="Togiya S."/>
            <person name="Komai F."/>
            <person name="Hara R."/>
            <person name="Takeuchi K."/>
            <person name="Arita M."/>
            <person name="Imose N."/>
            <person name="Musashino K."/>
            <person name="Yuuki H."/>
            <person name="Oshima A."/>
            <person name="Sasaki N."/>
            <person name="Aotsuka S."/>
            <person name="Yoshikawa Y."/>
            <person name="Matsunawa H."/>
            <person name="Ichihara T."/>
            <person name="Shiohata N."/>
            <person name="Sano S."/>
            <person name="Moriya S."/>
            <person name="Momiyama H."/>
            <person name="Satoh N."/>
            <person name="Takami S."/>
            <person name="Terashima Y."/>
            <person name="Suzuki O."/>
            <person name="Nakagawa S."/>
            <person name="Senoh A."/>
            <person name="Mizoguchi H."/>
            <person name="Goto Y."/>
            <person name="Shimizu F."/>
            <person name="Wakebe H."/>
            <person name="Hishigaki H."/>
            <person name="Watanabe T."/>
            <person name="Sugiyama A."/>
            <person name="Takemoto M."/>
            <person name="Kawakami B."/>
            <person name="Yamazaki M."/>
            <person name="Watanabe K."/>
            <person name="Kumagai A."/>
            <person name="Itakura S."/>
            <person name="Fukuzumi Y."/>
            <person name="Fujimori Y."/>
            <person name="Komiyama M."/>
            <person name="Tashiro H."/>
            <person name="Tanigami A."/>
            <person name="Fujiwara T."/>
            <person name="Ono T."/>
            <person name="Yamada K."/>
            <person name="Fujii Y."/>
            <person name="Ozaki K."/>
            <person name="Hirao M."/>
            <person name="Ohmori Y."/>
            <person name="Kawabata A."/>
            <person name="Hikiji T."/>
            <person name="Kobatake N."/>
            <person name="Inagaki H."/>
            <person name="Ikema Y."/>
            <person name="Okamoto S."/>
            <person name="Okitani R."/>
            <person name="Kawakami T."/>
            <person name="Noguchi S."/>
            <person name="Itoh T."/>
            <person name="Shigeta K."/>
            <person name="Senba T."/>
            <person name="Matsumura K."/>
            <person name="Nakajima Y."/>
            <person name="Mizuno T."/>
            <person name="Morinaga M."/>
            <person name="Sasaki M."/>
            <person name="Togashi T."/>
            <person name="Oyama M."/>
            <person name="Hata H."/>
            <person name="Watanabe M."/>
            <person name="Komatsu T."/>
            <person name="Mizushima-Sugano J."/>
            <person name="Satoh T."/>
            <person name="Shirai Y."/>
            <person name="Takahashi Y."/>
            <person name="Nakagawa K."/>
            <person name="Okumura K."/>
            <person name="Nagase T."/>
            <person name="Nomura N."/>
            <person name="Kikuchi H."/>
            <person name="Masuho Y."/>
            <person name="Yamashita R."/>
            <person name="Nakai K."/>
            <person name="Yada T."/>
            <person name="Nakamura Y."/>
            <person name="Ohara O."/>
            <person name="Isogai T."/>
            <person name="Sugano S."/>
        </authorList>
    </citation>
    <scope>NUCLEOTIDE SEQUENCE [LARGE SCALE MRNA] (ISOFORMS 1 AND 2)</scope>
</reference>
<reference key="4">
    <citation type="journal article" date="2004" name="Nature">
        <title>The DNA sequence and biology of human chromosome 19.</title>
        <authorList>
            <person name="Grimwood J."/>
            <person name="Gordon L.A."/>
            <person name="Olsen A.S."/>
            <person name="Terry A."/>
            <person name="Schmutz J."/>
            <person name="Lamerdin J.E."/>
            <person name="Hellsten U."/>
            <person name="Goodstein D."/>
            <person name="Couronne O."/>
            <person name="Tran-Gyamfi M."/>
            <person name="Aerts A."/>
            <person name="Altherr M."/>
            <person name="Ashworth L."/>
            <person name="Bajorek E."/>
            <person name="Black S."/>
            <person name="Branscomb E."/>
            <person name="Caenepeel S."/>
            <person name="Carrano A.V."/>
            <person name="Caoile C."/>
            <person name="Chan Y.M."/>
            <person name="Christensen M."/>
            <person name="Cleland C.A."/>
            <person name="Copeland A."/>
            <person name="Dalin E."/>
            <person name="Dehal P."/>
            <person name="Denys M."/>
            <person name="Detter J.C."/>
            <person name="Escobar J."/>
            <person name="Flowers D."/>
            <person name="Fotopulos D."/>
            <person name="Garcia C."/>
            <person name="Georgescu A.M."/>
            <person name="Glavina T."/>
            <person name="Gomez M."/>
            <person name="Gonzales E."/>
            <person name="Groza M."/>
            <person name="Hammon N."/>
            <person name="Hawkins T."/>
            <person name="Haydu L."/>
            <person name="Ho I."/>
            <person name="Huang W."/>
            <person name="Israni S."/>
            <person name="Jett J."/>
            <person name="Kadner K."/>
            <person name="Kimball H."/>
            <person name="Kobayashi A."/>
            <person name="Larionov V."/>
            <person name="Leem S.-H."/>
            <person name="Lopez F."/>
            <person name="Lou Y."/>
            <person name="Lowry S."/>
            <person name="Malfatti S."/>
            <person name="Martinez D."/>
            <person name="McCready P.M."/>
            <person name="Medina C."/>
            <person name="Morgan J."/>
            <person name="Nelson K."/>
            <person name="Nolan M."/>
            <person name="Ovcharenko I."/>
            <person name="Pitluck S."/>
            <person name="Pollard M."/>
            <person name="Popkie A.P."/>
            <person name="Predki P."/>
            <person name="Quan G."/>
            <person name="Ramirez L."/>
            <person name="Rash S."/>
            <person name="Retterer J."/>
            <person name="Rodriguez A."/>
            <person name="Rogers S."/>
            <person name="Salamov A."/>
            <person name="Salazar A."/>
            <person name="She X."/>
            <person name="Smith D."/>
            <person name="Slezak T."/>
            <person name="Solovyev V."/>
            <person name="Thayer N."/>
            <person name="Tice H."/>
            <person name="Tsai M."/>
            <person name="Ustaszewska A."/>
            <person name="Vo N."/>
            <person name="Wagner M."/>
            <person name="Wheeler J."/>
            <person name="Wu K."/>
            <person name="Xie G."/>
            <person name="Yang J."/>
            <person name="Dubchak I."/>
            <person name="Furey T.S."/>
            <person name="DeJong P."/>
            <person name="Dickson M."/>
            <person name="Gordon D."/>
            <person name="Eichler E.E."/>
            <person name="Pennacchio L.A."/>
            <person name="Richardson P."/>
            <person name="Stubbs L."/>
            <person name="Rokhsar D.S."/>
            <person name="Myers R.M."/>
            <person name="Rubin E.M."/>
            <person name="Lucas S.M."/>
        </authorList>
    </citation>
    <scope>NUCLEOTIDE SEQUENCE [LARGE SCALE GENOMIC DNA]</scope>
</reference>
<reference key="5">
    <citation type="submission" date="2005-07" db="EMBL/GenBank/DDBJ databases">
        <authorList>
            <person name="Mural R.J."/>
            <person name="Istrail S."/>
            <person name="Sutton G.G."/>
            <person name="Florea L."/>
            <person name="Halpern A.L."/>
            <person name="Mobarry C.M."/>
            <person name="Lippert R."/>
            <person name="Walenz B."/>
            <person name="Shatkay H."/>
            <person name="Dew I."/>
            <person name="Miller J.R."/>
            <person name="Flanigan M.J."/>
            <person name="Edwards N.J."/>
            <person name="Bolanos R."/>
            <person name="Fasulo D."/>
            <person name="Halldorsson B.V."/>
            <person name="Hannenhalli S."/>
            <person name="Turner R."/>
            <person name="Yooseph S."/>
            <person name="Lu F."/>
            <person name="Nusskern D.R."/>
            <person name="Shue B.C."/>
            <person name="Zheng X.H."/>
            <person name="Zhong F."/>
            <person name="Delcher A.L."/>
            <person name="Huson D.H."/>
            <person name="Kravitz S.A."/>
            <person name="Mouchard L."/>
            <person name="Reinert K."/>
            <person name="Remington K.A."/>
            <person name="Clark A.G."/>
            <person name="Waterman M.S."/>
            <person name="Eichler E.E."/>
            <person name="Adams M.D."/>
            <person name="Hunkapiller M.W."/>
            <person name="Myers E.W."/>
            <person name="Venter J.C."/>
        </authorList>
    </citation>
    <scope>NUCLEOTIDE SEQUENCE [LARGE SCALE GENOMIC DNA]</scope>
</reference>
<reference key="6">
    <citation type="journal article" date="2004" name="Genome Res.">
        <title>The status, quality, and expansion of the NIH full-length cDNA project: the Mammalian Gene Collection (MGC).</title>
        <authorList>
            <consortium name="The MGC Project Team"/>
        </authorList>
    </citation>
    <scope>NUCLEOTIDE SEQUENCE [LARGE SCALE MRNA] (ISOFORM 1)</scope>
    <source>
        <tissue>Muscle</tissue>
    </source>
</reference>
<reference key="7">
    <citation type="journal article" date="2012" name="Proc. Natl. Acad. Sci. U.S.A.">
        <title>N-terminal acetylome analyses and functional insights of the N-terminal acetyltransferase NatB.</title>
        <authorList>
            <person name="Van Damme P."/>
            <person name="Lasa M."/>
            <person name="Polevoda B."/>
            <person name="Gazquez C."/>
            <person name="Elosegui-Artola A."/>
            <person name="Kim D.S."/>
            <person name="De Juan-Pardo E."/>
            <person name="Demeyer K."/>
            <person name="Hole K."/>
            <person name="Larrea E."/>
            <person name="Timmerman E."/>
            <person name="Prieto J."/>
            <person name="Arnesen T."/>
            <person name="Sherman F."/>
            <person name="Gevaert K."/>
            <person name="Aldabe R."/>
        </authorList>
    </citation>
    <scope>ACETYLATION [LARGE SCALE ANALYSIS] AT MET-1</scope>
    <scope>IDENTIFICATION BY MASS SPECTROMETRY [LARGE SCALE ANALYSIS]</scope>
</reference>
<reference key="8">
    <citation type="journal article" date="2017" name="Nature">
        <title>KICSTOR recruits GATOR1 to the lysosome and is necessary for nutrients to regulate mTORC1.</title>
        <authorList>
            <person name="Wolfson R.L."/>
            <person name="Chantranupong L."/>
            <person name="Wyant G.A."/>
            <person name="Gu X."/>
            <person name="Orozco J.M."/>
            <person name="Shen K."/>
            <person name="Condon K.J."/>
            <person name="Petri S."/>
            <person name="Kedir J."/>
            <person name="Scaria S.M."/>
            <person name="Abu-Remaileh M."/>
            <person name="Frankel W.N."/>
            <person name="Sabatini D.M."/>
        </authorList>
    </citation>
    <scope>FUNCTION</scope>
    <scope>IDENTIFICATION IN THE KICSTOR COMPLEX</scope>
    <scope>SUBCELLULAR LOCATION</scope>
</reference>
<reference key="9">
    <citation type="journal article" date="2014" name="Am. J. Hum. Genet.">
        <title>Mutations in KPTN cause macrocephaly, neurodevelopmental delay, and seizures.</title>
        <authorList>
            <person name="Baple E.L."/>
            <person name="Maroofian R."/>
            <person name="Chioza B.A."/>
            <person name="Izadi M."/>
            <person name="Cross H.E."/>
            <person name="Al-Turki S."/>
            <person name="Barwick K."/>
            <person name="Skrzypiec A."/>
            <person name="Pawlak R."/>
            <person name="Wagner K."/>
            <person name="Coblentz R."/>
            <person name="Zainy T."/>
            <person name="Patton M.A."/>
            <person name="Mansour S."/>
            <person name="Rich P."/>
            <person name="Qualmann B."/>
            <person name="Hurles M.E."/>
            <person name="Kessels M.M."/>
            <person name="Crosby A.H."/>
        </authorList>
    </citation>
    <scope>VARIANT MRT41 TRP-SER-VAL-LEU-GLN-241 INS</scope>
    <scope>CHARACTERIZATION OF VARIANT MRT41 TRP-SER-VAL-LEU-GLN-241 INS</scope>
    <scope>SUBCELLULAR LOCATION</scope>
</reference>
<protein>
    <recommendedName>
        <fullName evidence="8">KICSTOR complex protein kaptin</fullName>
    </recommendedName>
    <alternativeName>
        <fullName evidence="5">Actin-associated protein 2E4</fullName>
    </alternativeName>
</protein>
<gene>
    <name evidence="9" type="primary">KPTN</name>
</gene>
<accession>Q9Y664</accession>
<accession>B3KN86</accession>
<accession>B4DQ76</accession>
<accession>Q96GT1</accession>
<feature type="chain" id="PRO_0000239234" description="KICSTOR complex protein kaptin">
    <location>
        <begin position="1"/>
        <end position="436"/>
    </location>
</feature>
<feature type="modified residue" description="N-acetylmethionine" evidence="10">
    <location>
        <position position="1"/>
    </location>
</feature>
<feature type="splice variant" id="VSP_053990" description="In isoform 2." evidence="6">
    <location>
        <begin position="1"/>
        <end position="240"/>
    </location>
</feature>
<feature type="sequence variant" id="VAR_070974" description="In MRT41; loss of localization to F-actin-rich regions; cytoplasmic accumulation at irregular perinuclear sites." evidence="3">
    <original>M</original>
    <variation>MWSVLQ</variation>
    <location>
        <position position="241"/>
    </location>
</feature>
<feature type="sequence conflict" description="In Ref. 1; AAD39358/AAF98790." evidence="7" ref="1">
    <original>S</original>
    <variation>N</variation>
    <location>
        <position position="26"/>
    </location>
</feature>
<feature type="sequence conflict" description="In Ref. 1; AAD39358/AAF98790." evidence="7" ref="1">
    <original>P</original>
    <variation>T</variation>
    <location>
        <position position="121"/>
    </location>
</feature>
<feature type="sequence conflict" description="In Ref. 1; AAD39358/AAF98790." evidence="7" ref="1">
    <original>E</original>
    <variation>V</variation>
    <location>
        <position position="124"/>
    </location>
</feature>
<feature type="sequence conflict" description="In Ref. 1; AAD39358/AAF98790." evidence="7" ref="1">
    <original>D</original>
    <variation>V</variation>
    <location>
        <position position="128"/>
    </location>
</feature>
<name>KPTN_HUMAN</name>
<comment type="function">
    <text evidence="4">As part of the KICSTOR complex functions in the amino acid-sensing branch of the TORC1 signaling pathway. Recruits, in an amino acid-independent manner, the GATOR1 complex to the lysosomal membranes and allows its interaction with GATOR2 and the RAG GTPases. Functions upstream of the RAG GTPases and is required to negatively regulate mTORC1 signaling in absence of amino acids. In absence of the KICSTOR complex mTORC1 is constitutively localized to the lysosome and activated. The KICSTOR complex is also probably involved in the regulation of mTORC1 by glucose.</text>
</comment>
<comment type="subunit">
    <text evidence="2 4">Part of the KICSTOR complex composed of KPTN, ITFG2, KICS2 and SZT2. SZT2 probably serves as a link between the other three proteins in the KICSTOR complex and mediates the direct interaction with the GATOR1 complex (PubMed:28199306). May associate with F-actin filaments (PubMed:10099934).</text>
</comment>
<comment type="interaction">
    <interactant intactId="EBI-1048252">
        <id>Q9Y664</id>
    </interactant>
    <interactant intactId="EBI-16170539">
        <id>Q5T2D3</id>
        <label>OTUD3</label>
    </interactant>
    <organismsDiffer>false</organismsDiffer>
    <experiments>8</experiments>
</comment>
<comment type="subcellular location">
    <subcellularLocation>
        <location evidence="4">Lysosome membrane</location>
    </subcellularLocation>
    <subcellularLocation>
        <location evidence="2 3">Cell projection</location>
        <location evidence="2 3">Lamellipodium</location>
    </subcellularLocation>
    <subcellularLocation>
        <location evidence="1">Cell projection</location>
        <location evidence="1">Stereocilium</location>
    </subcellularLocation>
    <text evidence="3 4">Localization to lysosomes is amino acid-independent (PubMed:28199306). Colocalizes with F-actin (PubMed:24239382).</text>
</comment>
<comment type="alternative products">
    <event type="alternative splicing"/>
    <isoform>
        <id>Q9Y664-1</id>
        <name>1</name>
        <sequence type="displayed"/>
    </isoform>
    <isoform>
        <id>Q9Y664-2</id>
        <name>2</name>
        <sequence type="described" ref="VSP_053990"/>
    </isoform>
</comment>
<comment type="disease" evidence="3">
    <disease id="DI-04038">
        <name>Intellectual developmental disorder, autosomal recessive 41</name>
        <acronym>MRT41</acronym>
        <description>A disorder characterized by significantly below average general intellectual functioning associated with impairments in adaptive behavior and manifested during the developmental period. MRT41 most consistent features are global developmental delay, macrocephaly with frontal bossing, high levels of anxiety, and some features suggestive of a pervasive developmental disorder. Less common features include fifth finger clinodactyly, recurrent pneumonia, and hepatosplenomegaly.</description>
        <dbReference type="MIM" id="615637"/>
    </disease>
    <text>The disease is caused by variants affecting the gene represented in this entry.</text>
</comment>
<comment type="sequence caution" evidence="7">
    <conflict type="frameshift">
        <sequence resource="EMBL-CDS" id="AAD39358"/>
    </conflict>
</comment>
<evidence type="ECO:0000250" key="1">
    <source>
        <dbReference type="UniProtKB" id="A0A1D5PJB7"/>
    </source>
</evidence>
<evidence type="ECO:0000269" key="2">
    <source>
    </source>
</evidence>
<evidence type="ECO:0000269" key="3">
    <source>
    </source>
</evidence>
<evidence type="ECO:0000269" key="4">
    <source>
    </source>
</evidence>
<evidence type="ECO:0000303" key="5">
    <source>
    </source>
</evidence>
<evidence type="ECO:0000303" key="6">
    <source>
    </source>
</evidence>
<evidence type="ECO:0000305" key="7"/>
<evidence type="ECO:0000305" key="8">
    <source>
    </source>
</evidence>
<evidence type="ECO:0000312" key="9">
    <source>
        <dbReference type="HGNC" id="HGNC:6404"/>
    </source>
</evidence>
<evidence type="ECO:0007744" key="10">
    <source>
    </source>
</evidence>
<sequence length="436" mass="48080">MMGEAAVAAGPCPLREDSFTRFSSQSNVYGLAGGAGGRGELLAATLKGKVLGFRYQDLRQKIRPVAKELQFNYIPVDAEIVSIDTFNKSPPKRGLVVGITFIKDSGDKGSPFLNIYCDYEPGSEYNLDSIAQSCLNLELQFTPFQLCHAEVQVGDQLETVFLLSGNDPAIHLYKENEGLHQFEEQPVENLFPELTNLTSSVLWLDVHNFPGTSRRLSALGCQSGYVRVAHVDQRSREVLQMWSVLQDGPISRVIVFSLSAAKETKDRPLQDEYSVLVASMLEPAVVYRDLLNRGLEDQLLLPGSDQFDSVLCSLVTDVDLDGRPEVLVATYGQELLCYKYRGPESGLPEAQHGFHLLWQRSFSSPLLAMAHVDLTGDGLQELAVVSLKGVHILQHSLIQASELVLTRLRHQVEQRRRRLQGLEDGAGAGPAENAAS</sequence>
<proteinExistence type="evidence at protein level"/>
<keyword id="KW-0007">Acetylation</keyword>
<keyword id="KW-0009">Actin-binding</keyword>
<keyword id="KW-0025">Alternative splicing</keyword>
<keyword id="KW-0966">Cell projection</keyword>
<keyword id="KW-0225">Disease variant</keyword>
<keyword id="KW-0991">Intellectual disability</keyword>
<keyword id="KW-0458">Lysosome</keyword>
<keyword id="KW-0472">Membrane</keyword>
<keyword id="KW-1267">Proteomics identification</keyword>
<keyword id="KW-1185">Reference proteome</keyword>